<dbReference type="EC" id="2.1.1.195" evidence="1"/>
<dbReference type="EMBL" id="AE016853">
    <property type="protein sequence ID" value="AAO58308.1"/>
    <property type="molecule type" value="Genomic_DNA"/>
</dbReference>
<dbReference type="RefSeq" id="NP_794613.1">
    <property type="nucleotide sequence ID" value="NC_004578.1"/>
</dbReference>
<dbReference type="RefSeq" id="WP_007244641.1">
    <property type="nucleotide sequence ID" value="NC_004578.1"/>
</dbReference>
<dbReference type="SMR" id="Q87VQ6"/>
<dbReference type="STRING" id="223283.PSPTO_4879"/>
<dbReference type="GeneID" id="1186562"/>
<dbReference type="KEGG" id="pst:PSPTO_4879"/>
<dbReference type="PATRIC" id="fig|223283.9.peg.4992"/>
<dbReference type="eggNOG" id="COG1903">
    <property type="taxonomic scope" value="Bacteria"/>
</dbReference>
<dbReference type="HOGENOM" id="CLU_041273_0_0_6"/>
<dbReference type="OrthoDB" id="6439987at2"/>
<dbReference type="PhylomeDB" id="Q87VQ6"/>
<dbReference type="UniPathway" id="UPA00148">
    <property type="reaction ID" value="UER00227"/>
</dbReference>
<dbReference type="Proteomes" id="UP000002515">
    <property type="component" value="Chromosome"/>
</dbReference>
<dbReference type="GO" id="GO:0043780">
    <property type="term" value="F:cobalt-precorrin-5B C1-methyltransferase activity"/>
    <property type="evidence" value="ECO:0007669"/>
    <property type="project" value="RHEA"/>
</dbReference>
<dbReference type="GO" id="GO:0019251">
    <property type="term" value="P:anaerobic cobalamin biosynthetic process"/>
    <property type="evidence" value="ECO:0007669"/>
    <property type="project" value="UniProtKB-UniRule"/>
</dbReference>
<dbReference type="GO" id="GO:0032259">
    <property type="term" value="P:methylation"/>
    <property type="evidence" value="ECO:0007669"/>
    <property type="project" value="UniProtKB-KW"/>
</dbReference>
<dbReference type="Gene3D" id="3.30.2110.10">
    <property type="entry name" value="CbiD-like"/>
    <property type="match status" value="1"/>
</dbReference>
<dbReference type="HAMAP" id="MF_00787">
    <property type="entry name" value="CbiD"/>
    <property type="match status" value="1"/>
</dbReference>
<dbReference type="InterPro" id="IPR002748">
    <property type="entry name" value="CbiD"/>
</dbReference>
<dbReference type="InterPro" id="IPR036074">
    <property type="entry name" value="CbiD_sf"/>
</dbReference>
<dbReference type="NCBIfam" id="TIGR00312">
    <property type="entry name" value="cbiD"/>
    <property type="match status" value="1"/>
</dbReference>
<dbReference type="NCBIfam" id="NF000849">
    <property type="entry name" value="PRK00075.1-1"/>
    <property type="match status" value="1"/>
</dbReference>
<dbReference type="PANTHER" id="PTHR35863">
    <property type="entry name" value="COBALT-PRECORRIN-5B C(1)-METHYLTRANSFERASE"/>
    <property type="match status" value="1"/>
</dbReference>
<dbReference type="PANTHER" id="PTHR35863:SF1">
    <property type="entry name" value="COBALT-PRECORRIN-5B C(1)-METHYLTRANSFERASE"/>
    <property type="match status" value="1"/>
</dbReference>
<dbReference type="Pfam" id="PF01888">
    <property type="entry name" value="CbiD"/>
    <property type="match status" value="1"/>
</dbReference>
<dbReference type="PIRSF" id="PIRSF026782">
    <property type="entry name" value="CbiD"/>
    <property type="match status" value="1"/>
</dbReference>
<dbReference type="SUPFAM" id="SSF111342">
    <property type="entry name" value="CbiD-like"/>
    <property type="match status" value="1"/>
</dbReference>
<name>CBID_PSESM</name>
<comment type="function">
    <text evidence="1">Catalyzes the methylation of C-1 in cobalt-precorrin-5B to form cobalt-precorrin-6A.</text>
</comment>
<comment type="catalytic activity">
    <reaction evidence="1">
        <text>Co-precorrin-5B + S-adenosyl-L-methionine = Co-precorrin-6A + S-adenosyl-L-homocysteine</text>
        <dbReference type="Rhea" id="RHEA:26285"/>
        <dbReference type="ChEBI" id="CHEBI:57856"/>
        <dbReference type="ChEBI" id="CHEBI:59789"/>
        <dbReference type="ChEBI" id="CHEBI:60063"/>
        <dbReference type="ChEBI" id="CHEBI:60064"/>
        <dbReference type="EC" id="2.1.1.195"/>
    </reaction>
</comment>
<comment type="pathway">
    <text evidence="1">Cofactor biosynthesis; adenosylcobalamin biosynthesis; cob(II)yrinate a,c-diamide from sirohydrochlorin (anaerobic route): step 6/10.</text>
</comment>
<comment type="similarity">
    <text evidence="1">Belongs to the CbiD family.</text>
</comment>
<accession>Q87VQ6</accession>
<protein>
    <recommendedName>
        <fullName evidence="1">Cobalt-precorrin-5B C(1)-methyltransferase</fullName>
        <ecNumber evidence="1">2.1.1.195</ecNumber>
    </recommendedName>
    <alternativeName>
        <fullName evidence="1">Cobalt-precorrin-6A synthase</fullName>
    </alternativeName>
</protein>
<reference key="1">
    <citation type="journal article" date="2003" name="Proc. Natl. Acad. Sci. U.S.A.">
        <title>The complete genome sequence of the Arabidopsis and tomato pathogen Pseudomonas syringae pv. tomato DC3000.</title>
        <authorList>
            <person name="Buell C.R."/>
            <person name="Joardar V."/>
            <person name="Lindeberg M."/>
            <person name="Selengut J."/>
            <person name="Paulsen I.T."/>
            <person name="Gwinn M.L."/>
            <person name="Dodson R.J."/>
            <person name="DeBoy R.T."/>
            <person name="Durkin A.S."/>
            <person name="Kolonay J.F."/>
            <person name="Madupu R."/>
            <person name="Daugherty S.C."/>
            <person name="Brinkac L.M."/>
            <person name="Beanan M.J."/>
            <person name="Haft D.H."/>
            <person name="Nelson W.C."/>
            <person name="Davidsen T.M."/>
            <person name="Zafar N."/>
            <person name="Zhou L."/>
            <person name="Liu J."/>
            <person name="Yuan Q."/>
            <person name="Khouri H.M."/>
            <person name="Fedorova N.B."/>
            <person name="Tran B."/>
            <person name="Russell D."/>
            <person name="Berry K.J."/>
            <person name="Utterback T.R."/>
            <person name="Van Aken S.E."/>
            <person name="Feldblyum T.V."/>
            <person name="D'Ascenzo M."/>
            <person name="Deng W.-L."/>
            <person name="Ramos A.R."/>
            <person name="Alfano J.R."/>
            <person name="Cartinhour S."/>
            <person name="Chatterjee A.K."/>
            <person name="Delaney T.P."/>
            <person name="Lazarowitz S.G."/>
            <person name="Martin G.B."/>
            <person name="Schneider D.J."/>
            <person name="Tang X."/>
            <person name="Bender C.L."/>
            <person name="White O."/>
            <person name="Fraser C.M."/>
            <person name="Collmer A."/>
        </authorList>
    </citation>
    <scope>NUCLEOTIDE SEQUENCE [LARGE SCALE GENOMIC DNA]</scope>
    <source>
        <strain>ATCC BAA-871 / DC3000</strain>
    </source>
</reference>
<sequence length="370" mass="38660">MREETAEQPAPLRSGLTTGSCATATSLAAARLLLSGQISDAVEIVLPKGKQVQMRLEFCRRVDNFAEAGTLKDAGDDPDVTHGALVFARVRQEAAPGVRFVAGAGVGSVTRPGLVLAVGEPAINPVPRRMMTEHLLRLAEELGYSGGFEVTIGVEGGEALALKTMNPRLGILGGLSILGTSGIVRPFSCAAYIASIHQGIDVATTNGYRHIAACTGNASEDTMRRVYNIPDIALIEMGDFVGAVLKHLRKVPVDKLSLCGGFGKISKLAAGHMDLHSRHSSIDLPQLALWAAQVGADAALQQQILHANTSQQALAMCAAAGVPLGDEVCRHALAFARSVVPATVEVEVFAIDRQGGVVGQAGVALSKEHT</sequence>
<keyword id="KW-0169">Cobalamin biosynthesis</keyword>
<keyword id="KW-0489">Methyltransferase</keyword>
<keyword id="KW-1185">Reference proteome</keyword>
<keyword id="KW-0949">S-adenosyl-L-methionine</keyword>
<keyword id="KW-0808">Transferase</keyword>
<proteinExistence type="inferred from homology"/>
<evidence type="ECO:0000255" key="1">
    <source>
        <dbReference type="HAMAP-Rule" id="MF_00787"/>
    </source>
</evidence>
<feature type="chain" id="PRO_0000141680" description="Cobalt-precorrin-5B C(1)-methyltransferase">
    <location>
        <begin position="1"/>
        <end position="370"/>
    </location>
</feature>
<organism>
    <name type="scientific">Pseudomonas syringae pv. tomato (strain ATCC BAA-871 / DC3000)</name>
    <dbReference type="NCBI Taxonomy" id="223283"/>
    <lineage>
        <taxon>Bacteria</taxon>
        <taxon>Pseudomonadati</taxon>
        <taxon>Pseudomonadota</taxon>
        <taxon>Gammaproteobacteria</taxon>
        <taxon>Pseudomonadales</taxon>
        <taxon>Pseudomonadaceae</taxon>
        <taxon>Pseudomonas</taxon>
    </lineage>
</organism>
<gene>
    <name evidence="1" type="primary">cbiD</name>
    <name type="ordered locus">PSPTO_4879</name>
</gene>